<comment type="function">
    <text evidence="1">Translocates 4-amino-4-deoxy-L-arabinose-phosphoundecaprenol (alpha-L-Ara4N-phosphoundecaprenol) from the cytoplasmic to the periplasmic side of the inner membrane.</text>
</comment>
<comment type="pathway">
    <text evidence="1">Bacterial outer membrane biogenesis; lipopolysaccharide biosynthesis.</text>
</comment>
<comment type="subunit">
    <text evidence="1">Heterodimer of ArnE and ArnF.</text>
</comment>
<comment type="subcellular location">
    <subcellularLocation>
        <location evidence="1">Cell inner membrane</location>
        <topology evidence="1">Multi-pass membrane protein</topology>
    </subcellularLocation>
</comment>
<comment type="similarity">
    <text evidence="1">Belongs to the ArnE family.</text>
</comment>
<proteinExistence type="inferred from homology"/>
<evidence type="ECO:0000255" key="1">
    <source>
        <dbReference type="HAMAP-Rule" id="MF_01869"/>
    </source>
</evidence>
<name>ARNE_YERPB</name>
<accession>B2K5L0</accession>
<organism>
    <name type="scientific">Yersinia pseudotuberculosis serotype IB (strain PB1/+)</name>
    <dbReference type="NCBI Taxonomy" id="502801"/>
    <lineage>
        <taxon>Bacteria</taxon>
        <taxon>Pseudomonadati</taxon>
        <taxon>Pseudomonadota</taxon>
        <taxon>Gammaproteobacteria</taxon>
        <taxon>Enterobacterales</taxon>
        <taxon>Yersiniaceae</taxon>
        <taxon>Yersinia</taxon>
    </lineage>
</organism>
<reference key="1">
    <citation type="submission" date="2008-04" db="EMBL/GenBank/DDBJ databases">
        <title>Complete sequence of Yersinia pseudotuberculosis PB1/+.</title>
        <authorList>
            <person name="Copeland A."/>
            <person name="Lucas S."/>
            <person name="Lapidus A."/>
            <person name="Glavina del Rio T."/>
            <person name="Dalin E."/>
            <person name="Tice H."/>
            <person name="Bruce D."/>
            <person name="Goodwin L."/>
            <person name="Pitluck S."/>
            <person name="Munk A.C."/>
            <person name="Brettin T."/>
            <person name="Detter J.C."/>
            <person name="Han C."/>
            <person name="Tapia R."/>
            <person name="Schmutz J."/>
            <person name="Larimer F."/>
            <person name="Land M."/>
            <person name="Hauser L."/>
            <person name="Challacombe J.F."/>
            <person name="Green L."/>
            <person name="Lindler L.E."/>
            <person name="Nikolich M.P."/>
            <person name="Richardson P."/>
        </authorList>
    </citation>
    <scope>NUCLEOTIDE SEQUENCE [LARGE SCALE GENOMIC DNA]</scope>
    <source>
        <strain>PB1/+</strain>
    </source>
</reference>
<dbReference type="EMBL" id="CP001048">
    <property type="protein sequence ID" value="ACC89361.1"/>
    <property type="molecule type" value="Genomic_DNA"/>
</dbReference>
<dbReference type="RefSeq" id="WP_011192541.1">
    <property type="nucleotide sequence ID" value="NZ_CP009780.1"/>
</dbReference>
<dbReference type="SMR" id="B2K5L0"/>
<dbReference type="GeneID" id="49785670"/>
<dbReference type="KEGG" id="ypb:YPTS_2400"/>
<dbReference type="PATRIC" id="fig|502801.10.peg.1806"/>
<dbReference type="UniPathway" id="UPA00030"/>
<dbReference type="GO" id="GO:0005886">
    <property type="term" value="C:plasma membrane"/>
    <property type="evidence" value="ECO:0007669"/>
    <property type="project" value="UniProtKB-SubCell"/>
</dbReference>
<dbReference type="GO" id="GO:1901505">
    <property type="term" value="F:carbohydrate derivative transmembrane transporter activity"/>
    <property type="evidence" value="ECO:0007669"/>
    <property type="project" value="InterPro"/>
</dbReference>
<dbReference type="GO" id="GO:0009245">
    <property type="term" value="P:lipid A biosynthetic process"/>
    <property type="evidence" value="ECO:0007669"/>
    <property type="project" value="UniProtKB-UniRule"/>
</dbReference>
<dbReference type="GO" id="GO:0009103">
    <property type="term" value="P:lipopolysaccharide biosynthetic process"/>
    <property type="evidence" value="ECO:0007669"/>
    <property type="project" value="UniProtKB-UniRule"/>
</dbReference>
<dbReference type="FunFam" id="1.10.3730.20:FF:000002">
    <property type="entry name" value="Probable 4-amino-4-deoxy-L-arabinose-phosphoundecaprenol flippase subunit ArnE"/>
    <property type="match status" value="1"/>
</dbReference>
<dbReference type="Gene3D" id="1.10.3730.20">
    <property type="match status" value="1"/>
</dbReference>
<dbReference type="HAMAP" id="MF_01869">
    <property type="entry name" value="Flippase_ArnE"/>
    <property type="match status" value="1"/>
</dbReference>
<dbReference type="InterPro" id="IPR000620">
    <property type="entry name" value="EamA_dom"/>
</dbReference>
<dbReference type="InterPro" id="IPR022883">
    <property type="entry name" value="Flippase_ArnE"/>
</dbReference>
<dbReference type="InterPro" id="IPR000390">
    <property type="entry name" value="Small_drug/metabolite_transptr"/>
</dbReference>
<dbReference type="NCBIfam" id="NF011625">
    <property type="entry name" value="PRK15051.1"/>
    <property type="match status" value="1"/>
</dbReference>
<dbReference type="PANTHER" id="PTHR30561:SF23">
    <property type="entry name" value="4-AMINO-4-DEOXY-L-ARABINOSE-PHOSPHOUNDECAPRENOL FLIPPASE SUBUNIT ARNE-RELATED"/>
    <property type="match status" value="1"/>
</dbReference>
<dbReference type="PANTHER" id="PTHR30561">
    <property type="entry name" value="SMR FAMILY PROTON-DEPENDENT DRUG EFFLUX TRANSPORTER SUGE"/>
    <property type="match status" value="1"/>
</dbReference>
<dbReference type="Pfam" id="PF00892">
    <property type="entry name" value="EamA"/>
    <property type="match status" value="1"/>
</dbReference>
<dbReference type="SUPFAM" id="SSF103481">
    <property type="entry name" value="Multidrug resistance efflux transporter EmrE"/>
    <property type="match status" value="1"/>
</dbReference>
<feature type="chain" id="PRO_0000383018" description="Probable 4-amino-4-deoxy-L-arabinose-phosphoundecaprenol flippase subunit ArnE">
    <location>
        <begin position="1"/>
        <end position="114"/>
    </location>
</feature>
<feature type="transmembrane region" description="Helical" evidence="1">
    <location>
        <begin position="38"/>
        <end position="58"/>
    </location>
</feature>
<feature type="transmembrane region" description="Helical" evidence="1">
    <location>
        <begin position="64"/>
        <end position="84"/>
    </location>
</feature>
<feature type="transmembrane region" description="Helical" evidence="1">
    <location>
        <begin position="94"/>
        <end position="114"/>
    </location>
</feature>
<feature type="domain" description="EamA" evidence="1">
    <location>
        <begin position="43"/>
        <end position="112"/>
    </location>
</feature>
<protein>
    <recommendedName>
        <fullName evidence="1">Probable 4-amino-4-deoxy-L-arabinose-phosphoundecaprenol flippase subunit ArnE</fullName>
        <shortName evidence="1">L-Ara4N-phosphoundecaprenol flippase subunit ArnE</shortName>
    </recommendedName>
    <alternativeName>
        <fullName evidence="1">Undecaprenyl phosphate-aminoarabinose flippase subunit ArnE</fullName>
    </alternativeName>
</protein>
<gene>
    <name evidence="1" type="primary">arnE</name>
    <name type="ordered locus">YPTS_2400</name>
</gene>
<keyword id="KW-0997">Cell inner membrane</keyword>
<keyword id="KW-1003">Cell membrane</keyword>
<keyword id="KW-0441">Lipid A biosynthesis</keyword>
<keyword id="KW-0444">Lipid biosynthesis</keyword>
<keyword id="KW-0443">Lipid metabolism</keyword>
<keyword id="KW-0448">Lipopolysaccharide biosynthesis</keyword>
<keyword id="KW-0472">Membrane</keyword>
<keyword id="KW-0812">Transmembrane</keyword>
<keyword id="KW-1133">Transmembrane helix</keyword>
<keyword id="KW-0813">Transport</keyword>
<sequence length="114" mass="12942">MNSYLLLLMVSLLTCIGQLCQKQAAQCWEQPQARRLNLTLRWLAIAVVSLGLGMLLWLRLLQQLPLSVAYPMLSFNFVLVTLAAQLFYGEKATLRHWLGVAAIIFGILLMSWHL</sequence>